<sequence>MNKDSTQTWGLKRDITPCFGARLVQEGHRLHFLADRAGFTGSFSEVQTLQLDEAFPHFVAHLELMLLSCELNPRYAHCVTLYRNGLTGEADTLGSHGYVYIAILNRHGFNRHLRVI</sequence>
<feature type="chain" id="PRO_0000168555" description="Orphan antitoxin YagB">
    <location>
        <begin position="1"/>
        <end position="116"/>
    </location>
</feature>
<name>YAGB_ECOLI</name>
<keyword id="KW-1185">Reference proteome</keyword>
<keyword id="KW-1277">Toxin-antitoxin system</keyword>
<dbReference type="EMBL" id="L20943">
    <property type="status" value="NOT_ANNOTATED_CDS"/>
    <property type="molecule type" value="Unassigned_DNA"/>
</dbReference>
<dbReference type="EMBL" id="U70214">
    <property type="protein sequence ID" value="AAB08687.1"/>
    <property type="status" value="ALT_INIT"/>
    <property type="molecule type" value="Genomic_DNA"/>
</dbReference>
<dbReference type="EMBL" id="U00096">
    <property type="protein sequence ID" value="AYC08170.1"/>
    <property type="molecule type" value="Genomic_DNA"/>
</dbReference>
<dbReference type="EMBL" id="AP009048">
    <property type="protein sequence ID" value="BAE76052.1"/>
    <property type="molecule type" value="Genomic_DNA"/>
</dbReference>
<dbReference type="PIR" id="B64752">
    <property type="entry name" value="B64752"/>
</dbReference>
<dbReference type="RefSeq" id="WP_001030800.1">
    <property type="nucleotide sequence ID" value="NZ_LN832404.1"/>
</dbReference>
<dbReference type="SMR" id="P37008"/>
<dbReference type="BioGRID" id="4262794">
    <property type="interactions" value="13"/>
</dbReference>
<dbReference type="FunCoup" id="P37008">
    <property type="interactions" value="9"/>
</dbReference>
<dbReference type="IntAct" id="P37008">
    <property type="interactions" value="4"/>
</dbReference>
<dbReference type="EnsemblBacteria" id="AYC08170">
    <property type="protein sequence ID" value="AYC08170"/>
    <property type="gene ID" value="b0266"/>
</dbReference>
<dbReference type="KEGG" id="ecj:JW0259"/>
<dbReference type="KEGG" id="ecoc:C3026_01290"/>
<dbReference type="PATRIC" id="fig|83333.103.peg.1021"/>
<dbReference type="EchoBASE" id="EB2243"/>
<dbReference type="eggNOG" id="ENOG5032A8G">
    <property type="taxonomic scope" value="Bacteria"/>
</dbReference>
<dbReference type="HOGENOM" id="CLU_144696_0_0_6"/>
<dbReference type="InParanoid" id="P37008"/>
<dbReference type="OMA" id="CAITPCF"/>
<dbReference type="OrthoDB" id="5588975at2"/>
<dbReference type="PhylomeDB" id="P37008"/>
<dbReference type="BioCyc" id="EcoCyc:EG12339-MONOMER"/>
<dbReference type="PRO" id="PR:P37008"/>
<dbReference type="Proteomes" id="UP000000625">
    <property type="component" value="Chromosome"/>
</dbReference>
<dbReference type="GO" id="GO:0051495">
    <property type="term" value="P:positive regulation of cytoskeleton organization"/>
    <property type="evidence" value="ECO:0007669"/>
    <property type="project" value="InterPro"/>
</dbReference>
<dbReference type="Gene3D" id="3.30.450.20">
    <property type="entry name" value="PAS domain"/>
    <property type="match status" value="1"/>
</dbReference>
<dbReference type="InterPro" id="IPR009320">
    <property type="entry name" value="Antitoxin_CbeA"/>
</dbReference>
<dbReference type="InterPro" id="IPR038025">
    <property type="entry name" value="CbeA_sf"/>
</dbReference>
<dbReference type="Pfam" id="PF06154">
    <property type="entry name" value="CbeA_antitoxin"/>
    <property type="match status" value="1"/>
</dbReference>
<dbReference type="SUPFAM" id="SSF143737">
    <property type="entry name" value="YeeU-like"/>
    <property type="match status" value="1"/>
</dbReference>
<proteinExistence type="inferred from homology"/>
<gene>
    <name type="primary">yagB</name>
    <name type="ordered locus">b0266</name>
    <name type="ordered locus">JW0259</name>
</gene>
<organism>
    <name type="scientific">Escherichia coli (strain K12)</name>
    <dbReference type="NCBI Taxonomy" id="83333"/>
    <lineage>
        <taxon>Bacteria</taxon>
        <taxon>Pseudomonadati</taxon>
        <taxon>Pseudomonadota</taxon>
        <taxon>Gammaproteobacteria</taxon>
        <taxon>Enterobacterales</taxon>
        <taxon>Enterobacteriaceae</taxon>
        <taxon>Escherichia</taxon>
    </lineage>
</organism>
<protein>
    <recommendedName>
        <fullName>Orphan antitoxin YagB</fullName>
    </recommendedName>
</protein>
<reference key="1">
    <citation type="journal article" date="1994" name="J. Bacteriol.">
        <title>The delta (argF-lacZ)205(U169) deletion greatly enhances resistance to hydrogen peroxide in stationary-phase Escherichia coli.</title>
        <authorList>
            <person name="Volkert M.R."/>
            <person name="Loewen P.C."/>
            <person name="Switala J."/>
            <person name="Crowley D."/>
            <person name="Conley M."/>
        </authorList>
    </citation>
    <scope>NUCLEOTIDE SEQUENCE [GENOMIC DNA]</scope>
</reference>
<reference key="2">
    <citation type="submission" date="1996-02" db="EMBL/GenBank/DDBJ databases">
        <title>Systematic sequencing of the Escherichia coli genome: analysis of the 4.0 - 6.0 min (189,987 - 281,416bp) region.</title>
        <authorList>
            <person name="Takemoto K."/>
            <person name="Mori H."/>
            <person name="Murayama N."/>
            <person name="Kataoka K."/>
            <person name="Yano M."/>
            <person name="Itoh T."/>
            <person name="Yamamoto Y."/>
            <person name="Inokuchi H."/>
            <person name="Miki T."/>
            <person name="Hatada E."/>
            <person name="Fukuda R."/>
            <person name="Ichihara S."/>
            <person name="Mizuno T."/>
            <person name="Makino K."/>
            <person name="Nakata A."/>
            <person name="Yura T."/>
            <person name="Sampei G."/>
            <person name="Mizobuchi K."/>
        </authorList>
    </citation>
    <scope>NUCLEOTIDE SEQUENCE [LARGE SCALE GENOMIC DNA]</scope>
    <source>
        <strain>K12 / W3110 / ATCC 27325 / DSM 5911</strain>
    </source>
</reference>
<reference key="3">
    <citation type="submission" date="1997-01" db="EMBL/GenBank/DDBJ databases">
        <title>Sequence of minutes 4-25 of Escherichia coli.</title>
        <authorList>
            <person name="Chung E."/>
            <person name="Allen E."/>
            <person name="Araujo R."/>
            <person name="Aparicio A.M."/>
            <person name="Davis K."/>
            <person name="Duncan M."/>
            <person name="Federspiel N."/>
            <person name="Hyman R."/>
            <person name="Kalman S."/>
            <person name="Komp C."/>
            <person name="Kurdi O."/>
            <person name="Lew H."/>
            <person name="Lin D."/>
            <person name="Namath A."/>
            <person name="Oefner P."/>
            <person name="Roberts D."/>
            <person name="Schramm S."/>
            <person name="Davis R.W."/>
        </authorList>
    </citation>
    <scope>NUCLEOTIDE SEQUENCE [LARGE SCALE GENOMIC DNA]</scope>
    <source>
        <strain>K12 / MG1655 / ATCC 47076</strain>
    </source>
</reference>
<reference key="4">
    <citation type="journal article" date="1997" name="Science">
        <title>The complete genome sequence of Escherichia coli K-12.</title>
        <authorList>
            <person name="Blattner F.R."/>
            <person name="Plunkett G. III"/>
            <person name="Bloch C.A."/>
            <person name="Perna N.T."/>
            <person name="Burland V."/>
            <person name="Riley M."/>
            <person name="Collado-Vides J."/>
            <person name="Glasner J.D."/>
            <person name="Rode C.K."/>
            <person name="Mayhew G.F."/>
            <person name="Gregor J."/>
            <person name="Davis N.W."/>
            <person name="Kirkpatrick H.A."/>
            <person name="Goeden M.A."/>
            <person name="Rose D.J."/>
            <person name="Mau B."/>
            <person name="Shao Y."/>
        </authorList>
    </citation>
    <scope>NUCLEOTIDE SEQUENCE [LARGE SCALE GENOMIC DNA]</scope>
    <source>
        <strain>K12 / MG1655 / ATCC 47076</strain>
    </source>
</reference>
<reference key="5">
    <citation type="journal article" date="2006" name="Mol. Syst. Biol.">
        <title>Highly accurate genome sequences of Escherichia coli K-12 strains MG1655 and W3110.</title>
        <authorList>
            <person name="Hayashi K."/>
            <person name="Morooka N."/>
            <person name="Yamamoto Y."/>
            <person name="Fujita K."/>
            <person name="Isono K."/>
            <person name="Choi S."/>
            <person name="Ohtsubo E."/>
            <person name="Baba T."/>
            <person name="Wanner B.L."/>
            <person name="Mori H."/>
            <person name="Horiuchi T."/>
        </authorList>
    </citation>
    <scope>NUCLEOTIDE SEQUENCE [LARGE SCALE GENOMIC DNA]</scope>
    <source>
        <strain>K12 / W3110 / ATCC 27325 / DSM 5911</strain>
    </source>
</reference>
<reference key="6">
    <citation type="unpublished observations" date="1996-03">
        <authorList>
            <person name="Rudd K.E."/>
        </authorList>
    </citation>
    <scope>IDENTIFICATION</scope>
</reference>
<evidence type="ECO:0000305" key="1"/>
<accession>P37008</accession>
<accession>A0A385XJ59</accession>
<accession>P77583</accession>
<accession>Q2MCF4</accession>
<comment type="function">
    <text evidence="1">Putative antitoxin component of a type IV toxin-antitoxin (TA) system; its cognate toxin is unknown.</text>
</comment>
<comment type="miscellaneous">
    <text evidence="1">Encoded by the CP4-6 prophage. An insertion element (ISX') seems to have deleted the end of yagB, fusing it to 13 insX' codons to make a 116 fusion pseudogene that may be expressed. The cognate toxin appears to have been deleted at the same time.</text>
</comment>
<comment type="similarity">
    <text evidence="1">Belongs to the CbeA/YafW/YfjZ antitoxin family.</text>
</comment>
<comment type="sequence caution" evidence="1">
    <conflict type="erroneous initiation">
        <sequence resource="EMBL-CDS" id="AAB08687"/>
    </conflict>
    <text>Extended N-terminus.</text>
</comment>
<comment type="sequence caution" evidence="1">
    <conflict type="frameshift">
        <sequence resource="EMBL" id="L20943"/>
    </conflict>
</comment>